<reference key="1">
    <citation type="submission" date="2007-08" db="EMBL/GenBank/DDBJ databases">
        <authorList>
            <consortium name="The Citrobacter koseri Genome Sequencing Project"/>
            <person name="McClelland M."/>
            <person name="Sanderson E.K."/>
            <person name="Porwollik S."/>
            <person name="Spieth J."/>
            <person name="Clifton W.S."/>
            <person name="Latreille P."/>
            <person name="Courtney L."/>
            <person name="Wang C."/>
            <person name="Pepin K."/>
            <person name="Bhonagiri V."/>
            <person name="Nash W."/>
            <person name="Johnson M."/>
            <person name="Thiruvilangam P."/>
            <person name="Wilson R."/>
        </authorList>
    </citation>
    <scope>NUCLEOTIDE SEQUENCE [LARGE SCALE GENOMIC DNA]</scope>
    <source>
        <strain>ATCC BAA-895 / CDC 4225-83 / SGSC4696</strain>
    </source>
</reference>
<accession>A8AQI3</accession>
<proteinExistence type="inferred from homology"/>
<evidence type="ECO:0000255" key="1">
    <source>
        <dbReference type="HAMAP-Rule" id="MF_01856"/>
    </source>
</evidence>
<sequence>MKKQNLRSLAAQAVEQVVEQGQSLSNVLPPLQQKVSDKDKALLQELCFGVLRTLSQLEWLINKLMSRPMTGKQRTVHYLIMVGFYQLLHTRIPPHAALAETVEGAVAIKRPQLKGLINGVLRQFQRQQEALLAEFATSEARFLHPSWLLKRLQKSYPTQWEAIVEANNQRPPMWLRVNRTHHSRDSWLTLLQDAGMNGFPHSAYPDALRLESPAPVHALPGFEEGWVTVQDASAQGCVSFLAPQNGEKILDLCAAPGGKTTHILEAAPEAQVLAVDVDEQRLSRVYDNLKRLGMKATVKQGDGRYPAQWCGEQKFDRILLDAPCSATGVIRRHPDIKWLRRDRDIAELAKLQSEILDAIWPHLKSGGTLVYATCSVLPEENSQQILAFLQRTPDATLTGTGTPAQPGVQNLPGAEEGDGFFYAKLIKK</sequence>
<keyword id="KW-0963">Cytoplasm</keyword>
<keyword id="KW-0489">Methyltransferase</keyword>
<keyword id="KW-1185">Reference proteome</keyword>
<keyword id="KW-0694">RNA-binding</keyword>
<keyword id="KW-0698">rRNA processing</keyword>
<keyword id="KW-0949">S-adenosyl-L-methionine</keyword>
<keyword id="KW-0808">Transferase</keyword>
<name>RSMB_CITK8</name>
<feature type="chain" id="PRO_0000366146" description="Ribosomal RNA small subunit methyltransferase B">
    <location>
        <begin position="1"/>
        <end position="428"/>
    </location>
</feature>
<feature type="active site" description="Nucleophile" evidence="1">
    <location>
        <position position="374"/>
    </location>
</feature>
<feature type="binding site" evidence="1">
    <location>
        <begin position="253"/>
        <end position="259"/>
    </location>
    <ligand>
        <name>S-adenosyl-L-methionine</name>
        <dbReference type="ChEBI" id="CHEBI:59789"/>
    </ligand>
</feature>
<feature type="binding site" evidence="1">
    <location>
        <position position="276"/>
    </location>
    <ligand>
        <name>S-adenosyl-L-methionine</name>
        <dbReference type="ChEBI" id="CHEBI:59789"/>
    </ligand>
</feature>
<feature type="binding site" evidence="1">
    <location>
        <position position="302"/>
    </location>
    <ligand>
        <name>S-adenosyl-L-methionine</name>
        <dbReference type="ChEBI" id="CHEBI:59789"/>
    </ligand>
</feature>
<feature type="binding site" evidence="1">
    <location>
        <position position="321"/>
    </location>
    <ligand>
        <name>S-adenosyl-L-methionine</name>
        <dbReference type="ChEBI" id="CHEBI:59789"/>
    </ligand>
</feature>
<protein>
    <recommendedName>
        <fullName evidence="1">Ribosomal RNA small subunit methyltransferase B</fullName>
        <ecNumber evidence="1">2.1.1.176</ecNumber>
    </recommendedName>
    <alternativeName>
        <fullName evidence="1">16S rRNA m5C967 methyltransferase</fullName>
    </alternativeName>
    <alternativeName>
        <fullName evidence="1">rRNA (cytosine-C(5)-)-methyltransferase RsmB</fullName>
    </alternativeName>
</protein>
<comment type="function">
    <text evidence="1">Specifically methylates the cytosine at position 967 (m5C967) of 16S rRNA.</text>
</comment>
<comment type="catalytic activity">
    <reaction evidence="1">
        <text>cytidine(967) in 16S rRNA + S-adenosyl-L-methionine = 5-methylcytidine(967) in 16S rRNA + S-adenosyl-L-homocysteine + H(+)</text>
        <dbReference type="Rhea" id="RHEA:42748"/>
        <dbReference type="Rhea" id="RHEA-COMP:10219"/>
        <dbReference type="Rhea" id="RHEA-COMP:10220"/>
        <dbReference type="ChEBI" id="CHEBI:15378"/>
        <dbReference type="ChEBI" id="CHEBI:57856"/>
        <dbReference type="ChEBI" id="CHEBI:59789"/>
        <dbReference type="ChEBI" id="CHEBI:74483"/>
        <dbReference type="ChEBI" id="CHEBI:82748"/>
        <dbReference type="EC" id="2.1.1.176"/>
    </reaction>
</comment>
<comment type="subcellular location">
    <subcellularLocation>
        <location evidence="1">Cytoplasm</location>
    </subcellularLocation>
</comment>
<comment type="similarity">
    <text evidence="1">Belongs to the class I-like SAM-binding methyltransferase superfamily. RsmB/NOP family.</text>
</comment>
<organism>
    <name type="scientific">Citrobacter koseri (strain ATCC BAA-895 / CDC 4225-83 / SGSC4696)</name>
    <dbReference type="NCBI Taxonomy" id="290338"/>
    <lineage>
        <taxon>Bacteria</taxon>
        <taxon>Pseudomonadati</taxon>
        <taxon>Pseudomonadota</taxon>
        <taxon>Gammaproteobacteria</taxon>
        <taxon>Enterobacterales</taxon>
        <taxon>Enterobacteriaceae</taxon>
        <taxon>Citrobacter</taxon>
    </lineage>
</organism>
<gene>
    <name evidence="1" type="primary">rsmB</name>
    <name evidence="1" type="synonym">sun</name>
    <name type="ordered locus">CKO_04701</name>
</gene>
<dbReference type="EC" id="2.1.1.176" evidence="1"/>
<dbReference type="EMBL" id="CP000822">
    <property type="protein sequence ID" value="ABV15746.1"/>
    <property type="molecule type" value="Genomic_DNA"/>
</dbReference>
<dbReference type="RefSeq" id="WP_012135419.1">
    <property type="nucleotide sequence ID" value="NC_009792.1"/>
</dbReference>
<dbReference type="SMR" id="A8AQI3"/>
<dbReference type="STRING" id="290338.CKO_04701"/>
<dbReference type="GeneID" id="45138227"/>
<dbReference type="KEGG" id="cko:CKO_04701"/>
<dbReference type="HOGENOM" id="CLU_005316_0_4_6"/>
<dbReference type="OrthoDB" id="9810297at2"/>
<dbReference type="Proteomes" id="UP000008148">
    <property type="component" value="Chromosome"/>
</dbReference>
<dbReference type="GO" id="GO:0005829">
    <property type="term" value="C:cytosol"/>
    <property type="evidence" value="ECO:0007669"/>
    <property type="project" value="TreeGrafter"/>
</dbReference>
<dbReference type="GO" id="GO:0003723">
    <property type="term" value="F:RNA binding"/>
    <property type="evidence" value="ECO:0007669"/>
    <property type="project" value="UniProtKB-KW"/>
</dbReference>
<dbReference type="GO" id="GO:0009383">
    <property type="term" value="F:rRNA (cytosine-C5-)-methyltransferase activity"/>
    <property type="evidence" value="ECO:0007669"/>
    <property type="project" value="TreeGrafter"/>
</dbReference>
<dbReference type="GO" id="GO:0006355">
    <property type="term" value="P:regulation of DNA-templated transcription"/>
    <property type="evidence" value="ECO:0007669"/>
    <property type="project" value="InterPro"/>
</dbReference>
<dbReference type="GO" id="GO:0070475">
    <property type="term" value="P:rRNA base methylation"/>
    <property type="evidence" value="ECO:0007669"/>
    <property type="project" value="TreeGrafter"/>
</dbReference>
<dbReference type="CDD" id="cd02440">
    <property type="entry name" value="AdoMet_MTases"/>
    <property type="match status" value="1"/>
</dbReference>
<dbReference type="CDD" id="cd00620">
    <property type="entry name" value="Methyltransferase_Sun"/>
    <property type="match status" value="1"/>
</dbReference>
<dbReference type="FunFam" id="1.10.287.730:FF:000001">
    <property type="entry name" value="Ribosomal RNA small subunit methyltransferase B"/>
    <property type="match status" value="1"/>
</dbReference>
<dbReference type="FunFam" id="1.10.940.10:FF:000002">
    <property type="entry name" value="Ribosomal RNA small subunit methyltransferase B"/>
    <property type="match status" value="1"/>
</dbReference>
<dbReference type="FunFam" id="3.30.70.1170:FF:000002">
    <property type="entry name" value="Ribosomal RNA small subunit methyltransferase B"/>
    <property type="match status" value="1"/>
</dbReference>
<dbReference type="FunFam" id="3.40.50.150:FF:000022">
    <property type="entry name" value="Ribosomal RNA small subunit methyltransferase B"/>
    <property type="match status" value="1"/>
</dbReference>
<dbReference type="Gene3D" id="1.10.287.730">
    <property type="entry name" value="Helix hairpin bin"/>
    <property type="match status" value="1"/>
</dbReference>
<dbReference type="Gene3D" id="1.10.940.10">
    <property type="entry name" value="NusB-like"/>
    <property type="match status" value="1"/>
</dbReference>
<dbReference type="Gene3D" id="3.30.70.1170">
    <property type="entry name" value="Sun protein, domain 3"/>
    <property type="match status" value="1"/>
</dbReference>
<dbReference type="Gene3D" id="3.40.50.150">
    <property type="entry name" value="Vaccinia Virus protein VP39"/>
    <property type="match status" value="1"/>
</dbReference>
<dbReference type="HAMAP" id="MF_01856">
    <property type="entry name" value="16SrRNA_methyltr_B"/>
    <property type="match status" value="1"/>
</dbReference>
<dbReference type="InterPro" id="IPR049560">
    <property type="entry name" value="MeTrfase_RsmB-F_NOP2_cat"/>
</dbReference>
<dbReference type="InterPro" id="IPR001678">
    <property type="entry name" value="MeTrfase_RsmB-F_NOP2_dom"/>
</dbReference>
<dbReference type="InterPro" id="IPR035926">
    <property type="entry name" value="NusB-like_sf"/>
</dbReference>
<dbReference type="InterPro" id="IPR006027">
    <property type="entry name" value="NusB_RsmB_TIM44"/>
</dbReference>
<dbReference type="InterPro" id="IPR023267">
    <property type="entry name" value="RCMT"/>
</dbReference>
<dbReference type="InterPro" id="IPR004573">
    <property type="entry name" value="rRNA_ssu_MeTfrase_B"/>
</dbReference>
<dbReference type="InterPro" id="IPR023541">
    <property type="entry name" value="rRNA_ssu_MeTfrase_B_ent"/>
</dbReference>
<dbReference type="InterPro" id="IPR054728">
    <property type="entry name" value="RsmB-like_ferredoxin"/>
</dbReference>
<dbReference type="InterPro" id="IPR048019">
    <property type="entry name" value="RsmB-like_N"/>
</dbReference>
<dbReference type="InterPro" id="IPR018314">
    <property type="entry name" value="RsmB/NOL1/NOP2-like_CS"/>
</dbReference>
<dbReference type="InterPro" id="IPR029063">
    <property type="entry name" value="SAM-dependent_MTases_sf"/>
</dbReference>
<dbReference type="NCBIfam" id="NF008149">
    <property type="entry name" value="PRK10901.1"/>
    <property type="match status" value="1"/>
</dbReference>
<dbReference type="NCBIfam" id="NF011494">
    <property type="entry name" value="PRK14902.1"/>
    <property type="match status" value="1"/>
</dbReference>
<dbReference type="NCBIfam" id="TIGR00563">
    <property type="entry name" value="rsmB"/>
    <property type="match status" value="1"/>
</dbReference>
<dbReference type="PANTHER" id="PTHR22807:SF61">
    <property type="entry name" value="NOL1_NOP2_SUN FAMILY PROTEIN _ ANTITERMINATION NUSB DOMAIN-CONTAINING PROTEIN"/>
    <property type="match status" value="1"/>
</dbReference>
<dbReference type="PANTHER" id="PTHR22807">
    <property type="entry name" value="NOP2 YEAST -RELATED NOL1/NOP2/FMU SUN DOMAIN-CONTAINING"/>
    <property type="match status" value="1"/>
</dbReference>
<dbReference type="Pfam" id="PF01189">
    <property type="entry name" value="Methyltr_RsmB-F"/>
    <property type="match status" value="1"/>
</dbReference>
<dbReference type="Pfam" id="PF01029">
    <property type="entry name" value="NusB"/>
    <property type="match status" value="1"/>
</dbReference>
<dbReference type="Pfam" id="PF22458">
    <property type="entry name" value="RsmF-B_ferredox"/>
    <property type="match status" value="1"/>
</dbReference>
<dbReference type="PRINTS" id="PR02008">
    <property type="entry name" value="RCMTFAMILY"/>
</dbReference>
<dbReference type="SUPFAM" id="SSF48013">
    <property type="entry name" value="NusB-like"/>
    <property type="match status" value="1"/>
</dbReference>
<dbReference type="SUPFAM" id="SSF53335">
    <property type="entry name" value="S-adenosyl-L-methionine-dependent methyltransferases"/>
    <property type="match status" value="1"/>
</dbReference>
<dbReference type="PROSITE" id="PS01153">
    <property type="entry name" value="NOL1_NOP2_SUN"/>
    <property type="match status" value="1"/>
</dbReference>
<dbReference type="PROSITE" id="PS51686">
    <property type="entry name" value="SAM_MT_RSMB_NOP"/>
    <property type="match status" value="1"/>
</dbReference>